<gene>
    <name evidence="1" type="primary">epd</name>
    <name type="ordered locus">SeHA_C3307</name>
</gene>
<protein>
    <recommendedName>
        <fullName evidence="1">D-erythrose-4-phosphate dehydrogenase</fullName>
        <shortName evidence="1">E4PDH</shortName>
        <ecNumber evidence="1">1.2.1.72</ecNumber>
    </recommendedName>
</protein>
<keyword id="KW-0963">Cytoplasm</keyword>
<keyword id="KW-0520">NAD</keyword>
<keyword id="KW-0560">Oxidoreductase</keyword>
<keyword id="KW-0664">Pyridoxine biosynthesis</keyword>
<comment type="function">
    <text evidence="1">Catalyzes the NAD-dependent conversion of D-erythrose 4-phosphate to 4-phosphoerythronate.</text>
</comment>
<comment type="catalytic activity">
    <reaction evidence="1">
        <text>D-erythrose 4-phosphate + NAD(+) + H2O = 4-phospho-D-erythronate + NADH + 2 H(+)</text>
        <dbReference type="Rhea" id="RHEA:12056"/>
        <dbReference type="ChEBI" id="CHEBI:15377"/>
        <dbReference type="ChEBI" id="CHEBI:15378"/>
        <dbReference type="ChEBI" id="CHEBI:16897"/>
        <dbReference type="ChEBI" id="CHEBI:57540"/>
        <dbReference type="ChEBI" id="CHEBI:57945"/>
        <dbReference type="ChEBI" id="CHEBI:58766"/>
        <dbReference type="EC" id="1.2.1.72"/>
    </reaction>
</comment>
<comment type="pathway">
    <text evidence="1">Cofactor biosynthesis; pyridoxine 5'-phosphate biosynthesis; pyridoxine 5'-phosphate from D-erythrose 4-phosphate: step 1/5.</text>
</comment>
<comment type="subunit">
    <text evidence="1">Homotetramer.</text>
</comment>
<comment type="subcellular location">
    <subcellularLocation>
        <location evidence="1">Cytoplasm</location>
    </subcellularLocation>
</comment>
<comment type="similarity">
    <text evidence="1">Belongs to the glyceraldehyde-3-phosphate dehydrogenase family. Epd subfamily.</text>
</comment>
<reference key="1">
    <citation type="journal article" date="2011" name="J. Bacteriol.">
        <title>Comparative genomics of 28 Salmonella enterica isolates: evidence for CRISPR-mediated adaptive sublineage evolution.</title>
        <authorList>
            <person name="Fricke W.F."/>
            <person name="Mammel M.K."/>
            <person name="McDermott P.F."/>
            <person name="Tartera C."/>
            <person name="White D.G."/>
            <person name="Leclerc J.E."/>
            <person name="Ravel J."/>
            <person name="Cebula T.A."/>
        </authorList>
    </citation>
    <scope>NUCLEOTIDE SEQUENCE [LARGE SCALE GENOMIC DNA]</scope>
    <source>
        <strain>SL476</strain>
    </source>
</reference>
<feature type="chain" id="PRO_1000186836" description="D-erythrose-4-phosphate dehydrogenase">
    <location>
        <begin position="1"/>
        <end position="348"/>
    </location>
</feature>
<feature type="active site" description="Nucleophile" evidence="1">
    <location>
        <position position="155"/>
    </location>
</feature>
<feature type="binding site" evidence="1">
    <location>
        <begin position="12"/>
        <end position="13"/>
    </location>
    <ligand>
        <name>NAD(+)</name>
        <dbReference type="ChEBI" id="CHEBI:57540"/>
    </ligand>
</feature>
<feature type="binding site" evidence="1">
    <location>
        <position position="81"/>
    </location>
    <ligand>
        <name>NAD(+)</name>
        <dbReference type="ChEBI" id="CHEBI:57540"/>
    </ligand>
</feature>
<feature type="binding site" evidence="1">
    <location>
        <begin position="154"/>
        <end position="156"/>
    </location>
    <ligand>
        <name>substrate</name>
    </ligand>
</feature>
<feature type="binding site" evidence="1">
    <location>
        <position position="200"/>
    </location>
    <ligand>
        <name>substrate</name>
    </ligand>
</feature>
<feature type="binding site" evidence="1">
    <location>
        <begin position="213"/>
        <end position="214"/>
    </location>
    <ligand>
        <name>substrate</name>
    </ligand>
</feature>
<feature type="binding site" evidence="1">
    <location>
        <position position="236"/>
    </location>
    <ligand>
        <name>substrate</name>
    </ligand>
</feature>
<feature type="binding site" evidence="1">
    <location>
        <position position="318"/>
    </location>
    <ligand>
        <name>NAD(+)</name>
        <dbReference type="ChEBI" id="CHEBI:57540"/>
    </ligand>
</feature>
<feature type="site" description="Activates thiol group during catalysis" evidence="1">
    <location>
        <position position="182"/>
    </location>
</feature>
<dbReference type="EC" id="1.2.1.72" evidence="1"/>
<dbReference type="EMBL" id="CP001120">
    <property type="protein sequence ID" value="ACF69310.1"/>
    <property type="molecule type" value="Genomic_DNA"/>
</dbReference>
<dbReference type="RefSeq" id="WP_000218338.1">
    <property type="nucleotide sequence ID" value="NC_011083.1"/>
</dbReference>
<dbReference type="SMR" id="B4THF4"/>
<dbReference type="KEGG" id="seh:SeHA_C3307"/>
<dbReference type="HOGENOM" id="CLU_030140_0_0_6"/>
<dbReference type="UniPathway" id="UPA00244">
    <property type="reaction ID" value="UER00309"/>
</dbReference>
<dbReference type="Proteomes" id="UP000001866">
    <property type="component" value="Chromosome"/>
</dbReference>
<dbReference type="GO" id="GO:0005737">
    <property type="term" value="C:cytoplasm"/>
    <property type="evidence" value="ECO:0007669"/>
    <property type="project" value="UniProtKB-SubCell"/>
</dbReference>
<dbReference type="GO" id="GO:0048001">
    <property type="term" value="F:erythrose-4-phosphate dehydrogenase activity"/>
    <property type="evidence" value="ECO:0007669"/>
    <property type="project" value="UniProtKB-UniRule"/>
</dbReference>
<dbReference type="GO" id="GO:0051287">
    <property type="term" value="F:NAD binding"/>
    <property type="evidence" value="ECO:0007669"/>
    <property type="project" value="InterPro"/>
</dbReference>
<dbReference type="GO" id="GO:0050661">
    <property type="term" value="F:NADP binding"/>
    <property type="evidence" value="ECO:0007669"/>
    <property type="project" value="InterPro"/>
</dbReference>
<dbReference type="GO" id="GO:0006006">
    <property type="term" value="P:glucose metabolic process"/>
    <property type="evidence" value="ECO:0007669"/>
    <property type="project" value="InterPro"/>
</dbReference>
<dbReference type="GO" id="GO:0042823">
    <property type="term" value="P:pyridoxal phosphate biosynthetic process"/>
    <property type="evidence" value="ECO:0007669"/>
    <property type="project" value="UniProtKB-UniRule"/>
</dbReference>
<dbReference type="GO" id="GO:0008615">
    <property type="term" value="P:pyridoxine biosynthetic process"/>
    <property type="evidence" value="ECO:0007669"/>
    <property type="project" value="UniProtKB-UniRule"/>
</dbReference>
<dbReference type="CDD" id="cd23937">
    <property type="entry name" value="GAPDH_C_E4PDH"/>
    <property type="match status" value="1"/>
</dbReference>
<dbReference type="CDD" id="cd17892">
    <property type="entry name" value="GAPDH_N_E4PDH"/>
    <property type="match status" value="1"/>
</dbReference>
<dbReference type="FunFam" id="3.30.360.10:FF:000007">
    <property type="entry name" value="D-erythrose-4-phosphate dehydrogenase"/>
    <property type="match status" value="1"/>
</dbReference>
<dbReference type="FunFam" id="3.40.50.720:FF:000001">
    <property type="entry name" value="Glyceraldehyde-3-phosphate dehydrogenase"/>
    <property type="match status" value="1"/>
</dbReference>
<dbReference type="Gene3D" id="3.30.360.10">
    <property type="entry name" value="Dihydrodipicolinate Reductase, domain 2"/>
    <property type="match status" value="1"/>
</dbReference>
<dbReference type="Gene3D" id="3.40.50.720">
    <property type="entry name" value="NAD(P)-binding Rossmann-like Domain"/>
    <property type="match status" value="1"/>
</dbReference>
<dbReference type="HAMAP" id="MF_01640">
    <property type="entry name" value="E4P_dehydrog"/>
    <property type="match status" value="1"/>
</dbReference>
<dbReference type="InterPro" id="IPR006422">
    <property type="entry name" value="E4P_DH_bac"/>
</dbReference>
<dbReference type="InterPro" id="IPR020831">
    <property type="entry name" value="GlycerAld/Erythrose_P_DH"/>
</dbReference>
<dbReference type="InterPro" id="IPR020830">
    <property type="entry name" value="GlycerAld_3-P_DH_AS"/>
</dbReference>
<dbReference type="InterPro" id="IPR020829">
    <property type="entry name" value="GlycerAld_3-P_DH_cat"/>
</dbReference>
<dbReference type="InterPro" id="IPR020828">
    <property type="entry name" value="GlycerAld_3-P_DH_NAD(P)-bd"/>
</dbReference>
<dbReference type="InterPro" id="IPR006424">
    <property type="entry name" value="Glyceraldehyde-3-P_DH_1"/>
</dbReference>
<dbReference type="InterPro" id="IPR036291">
    <property type="entry name" value="NAD(P)-bd_dom_sf"/>
</dbReference>
<dbReference type="NCBIfam" id="TIGR01532">
    <property type="entry name" value="E4PD_g-proteo"/>
    <property type="match status" value="1"/>
</dbReference>
<dbReference type="NCBIfam" id="TIGR01534">
    <property type="entry name" value="GAPDH-I"/>
    <property type="match status" value="1"/>
</dbReference>
<dbReference type="NCBIfam" id="NF010058">
    <property type="entry name" value="PRK13535.1"/>
    <property type="match status" value="1"/>
</dbReference>
<dbReference type="PANTHER" id="PTHR43148">
    <property type="entry name" value="GLYCERALDEHYDE-3-PHOSPHATE DEHYDROGENASE 2"/>
    <property type="match status" value="1"/>
</dbReference>
<dbReference type="Pfam" id="PF02800">
    <property type="entry name" value="Gp_dh_C"/>
    <property type="match status" value="1"/>
</dbReference>
<dbReference type="Pfam" id="PF00044">
    <property type="entry name" value="Gp_dh_N"/>
    <property type="match status" value="1"/>
</dbReference>
<dbReference type="PIRSF" id="PIRSF000149">
    <property type="entry name" value="GAP_DH"/>
    <property type="match status" value="1"/>
</dbReference>
<dbReference type="PRINTS" id="PR00078">
    <property type="entry name" value="G3PDHDRGNASE"/>
</dbReference>
<dbReference type="SMART" id="SM00846">
    <property type="entry name" value="Gp_dh_N"/>
    <property type="match status" value="1"/>
</dbReference>
<dbReference type="SUPFAM" id="SSF55347">
    <property type="entry name" value="Glyceraldehyde-3-phosphate dehydrogenase-like, C-terminal domain"/>
    <property type="match status" value="1"/>
</dbReference>
<dbReference type="SUPFAM" id="SSF51735">
    <property type="entry name" value="NAD(P)-binding Rossmann-fold domains"/>
    <property type="match status" value="1"/>
</dbReference>
<dbReference type="PROSITE" id="PS00071">
    <property type="entry name" value="GAPDH"/>
    <property type="match status" value="1"/>
</dbReference>
<organism>
    <name type="scientific">Salmonella heidelberg (strain SL476)</name>
    <dbReference type="NCBI Taxonomy" id="454169"/>
    <lineage>
        <taxon>Bacteria</taxon>
        <taxon>Pseudomonadati</taxon>
        <taxon>Pseudomonadota</taxon>
        <taxon>Gammaproteobacteria</taxon>
        <taxon>Enterobacterales</taxon>
        <taxon>Enterobacteriaceae</taxon>
        <taxon>Salmonella</taxon>
    </lineage>
</organism>
<accession>B4THF4</accession>
<sequence length="348" mass="38125">MTVRIAINGFGRIGRNVVRALYESGRRAEITVVAINELADAAGMAHLLKYDTSHGRFAWEVRHEREQLFVGDDVIRILHERTLADLPWRELGVDVVLDCTGVYGNREHGEAHIAAGAKKVLFSHPGSNDLDATVVFGVNQNQLRAEHRIVSNASCTTNCIIPVIKLLDDAYGIESGTVTTIHSAMNDQQVIDAYHSDLRRTRAASQSIIPVDTKLAAGITRIFPQFNDRFEAIAVRVPTINVTAIDLSVTVKKPVKASEVNQLLQKAAQGAFHGIVDYTESPLVSIDFNHDPHSAIVDGTQTRVSGAHLIKTLVWCDNEWGFANRMLDTTLAMAAVGFRLDASASTKL</sequence>
<name>E4PD_SALHS</name>
<evidence type="ECO:0000255" key="1">
    <source>
        <dbReference type="HAMAP-Rule" id="MF_01640"/>
    </source>
</evidence>
<proteinExistence type="inferred from homology"/>